<dbReference type="EMBL" id="CP001287">
    <property type="protein sequence ID" value="ACK65022.1"/>
    <property type="molecule type" value="Genomic_DNA"/>
</dbReference>
<dbReference type="RefSeq" id="WP_012594297.1">
    <property type="nucleotide sequence ID" value="NC_011726.1"/>
</dbReference>
<dbReference type="SMR" id="B7JZS9"/>
<dbReference type="STRING" id="41431.PCC8801_0945"/>
<dbReference type="KEGG" id="cyp:PCC8801_0945"/>
<dbReference type="eggNOG" id="COG0468">
    <property type="taxonomic scope" value="Bacteria"/>
</dbReference>
<dbReference type="HOGENOM" id="CLU_040469_3_2_3"/>
<dbReference type="OrthoDB" id="9776733at2"/>
<dbReference type="Proteomes" id="UP000008204">
    <property type="component" value="Chromosome"/>
</dbReference>
<dbReference type="GO" id="GO:0005829">
    <property type="term" value="C:cytosol"/>
    <property type="evidence" value="ECO:0007669"/>
    <property type="project" value="TreeGrafter"/>
</dbReference>
<dbReference type="GO" id="GO:0005524">
    <property type="term" value="F:ATP binding"/>
    <property type="evidence" value="ECO:0007669"/>
    <property type="project" value="UniProtKB-UniRule"/>
</dbReference>
<dbReference type="GO" id="GO:0016887">
    <property type="term" value="F:ATP hydrolysis activity"/>
    <property type="evidence" value="ECO:0007669"/>
    <property type="project" value="InterPro"/>
</dbReference>
<dbReference type="GO" id="GO:0140664">
    <property type="term" value="F:ATP-dependent DNA damage sensor activity"/>
    <property type="evidence" value="ECO:0007669"/>
    <property type="project" value="InterPro"/>
</dbReference>
<dbReference type="GO" id="GO:0003684">
    <property type="term" value="F:damaged DNA binding"/>
    <property type="evidence" value="ECO:0007669"/>
    <property type="project" value="UniProtKB-UniRule"/>
</dbReference>
<dbReference type="GO" id="GO:0003697">
    <property type="term" value="F:single-stranded DNA binding"/>
    <property type="evidence" value="ECO:0007669"/>
    <property type="project" value="UniProtKB-UniRule"/>
</dbReference>
<dbReference type="GO" id="GO:0006310">
    <property type="term" value="P:DNA recombination"/>
    <property type="evidence" value="ECO:0007669"/>
    <property type="project" value="UniProtKB-UniRule"/>
</dbReference>
<dbReference type="GO" id="GO:0006281">
    <property type="term" value="P:DNA repair"/>
    <property type="evidence" value="ECO:0007669"/>
    <property type="project" value="UniProtKB-UniRule"/>
</dbReference>
<dbReference type="GO" id="GO:0009432">
    <property type="term" value="P:SOS response"/>
    <property type="evidence" value="ECO:0007669"/>
    <property type="project" value="UniProtKB-UniRule"/>
</dbReference>
<dbReference type="CDD" id="cd00983">
    <property type="entry name" value="RecA"/>
    <property type="match status" value="1"/>
</dbReference>
<dbReference type="FunFam" id="3.40.50.300:FF:000087">
    <property type="entry name" value="Recombinase RecA"/>
    <property type="match status" value="1"/>
</dbReference>
<dbReference type="Gene3D" id="3.40.50.300">
    <property type="entry name" value="P-loop containing nucleotide triphosphate hydrolases"/>
    <property type="match status" value="1"/>
</dbReference>
<dbReference type="HAMAP" id="MF_00268">
    <property type="entry name" value="RecA"/>
    <property type="match status" value="1"/>
</dbReference>
<dbReference type="InterPro" id="IPR003593">
    <property type="entry name" value="AAA+_ATPase"/>
</dbReference>
<dbReference type="InterPro" id="IPR013765">
    <property type="entry name" value="DNA_recomb/repair_RecA"/>
</dbReference>
<dbReference type="InterPro" id="IPR020584">
    <property type="entry name" value="DNA_recomb/repair_RecA_CS"/>
</dbReference>
<dbReference type="InterPro" id="IPR027417">
    <property type="entry name" value="P-loop_NTPase"/>
</dbReference>
<dbReference type="InterPro" id="IPR049261">
    <property type="entry name" value="RecA-like_C"/>
</dbReference>
<dbReference type="InterPro" id="IPR049428">
    <property type="entry name" value="RecA-like_N"/>
</dbReference>
<dbReference type="InterPro" id="IPR020588">
    <property type="entry name" value="RecA_ATP-bd"/>
</dbReference>
<dbReference type="InterPro" id="IPR023400">
    <property type="entry name" value="RecA_C_sf"/>
</dbReference>
<dbReference type="InterPro" id="IPR020587">
    <property type="entry name" value="RecA_monomer-monomer_interface"/>
</dbReference>
<dbReference type="NCBIfam" id="TIGR02012">
    <property type="entry name" value="tigrfam_recA"/>
    <property type="match status" value="1"/>
</dbReference>
<dbReference type="PANTHER" id="PTHR45900:SF1">
    <property type="entry name" value="MITOCHONDRIAL DNA REPAIR PROTEIN RECA HOMOLOG-RELATED"/>
    <property type="match status" value="1"/>
</dbReference>
<dbReference type="PANTHER" id="PTHR45900">
    <property type="entry name" value="RECA"/>
    <property type="match status" value="1"/>
</dbReference>
<dbReference type="Pfam" id="PF00154">
    <property type="entry name" value="RecA"/>
    <property type="match status" value="1"/>
</dbReference>
<dbReference type="Pfam" id="PF21096">
    <property type="entry name" value="RecA_C"/>
    <property type="match status" value="1"/>
</dbReference>
<dbReference type="PRINTS" id="PR00142">
    <property type="entry name" value="RECA"/>
</dbReference>
<dbReference type="SMART" id="SM00382">
    <property type="entry name" value="AAA"/>
    <property type="match status" value="1"/>
</dbReference>
<dbReference type="SUPFAM" id="SSF52540">
    <property type="entry name" value="P-loop containing nucleoside triphosphate hydrolases"/>
    <property type="match status" value="1"/>
</dbReference>
<dbReference type="SUPFAM" id="SSF54752">
    <property type="entry name" value="RecA protein, C-terminal domain"/>
    <property type="match status" value="1"/>
</dbReference>
<dbReference type="PROSITE" id="PS00321">
    <property type="entry name" value="RECA_1"/>
    <property type="match status" value="1"/>
</dbReference>
<dbReference type="PROSITE" id="PS50162">
    <property type="entry name" value="RECA_2"/>
    <property type="match status" value="1"/>
</dbReference>
<dbReference type="PROSITE" id="PS50163">
    <property type="entry name" value="RECA_3"/>
    <property type="match status" value="1"/>
</dbReference>
<accession>B7JZS9</accession>
<name>RECA_RIPO1</name>
<proteinExistence type="inferred from homology"/>
<reference key="1">
    <citation type="journal article" date="2011" name="MBio">
        <title>Novel metabolic attributes of the genus Cyanothece, comprising a group of unicellular nitrogen-fixing Cyanobacteria.</title>
        <authorList>
            <person name="Bandyopadhyay A."/>
            <person name="Elvitigala T."/>
            <person name="Welsh E."/>
            <person name="Stockel J."/>
            <person name="Liberton M."/>
            <person name="Min H."/>
            <person name="Sherman L.A."/>
            <person name="Pakrasi H.B."/>
        </authorList>
    </citation>
    <scope>NUCLEOTIDE SEQUENCE [LARGE SCALE GENOMIC DNA]</scope>
    <source>
        <strain>PCC 8801 / RF-1</strain>
    </source>
</reference>
<keyword id="KW-0067">ATP-binding</keyword>
<keyword id="KW-0963">Cytoplasm</keyword>
<keyword id="KW-0227">DNA damage</keyword>
<keyword id="KW-0233">DNA recombination</keyword>
<keyword id="KW-0234">DNA repair</keyword>
<keyword id="KW-0238">DNA-binding</keyword>
<keyword id="KW-0547">Nucleotide-binding</keyword>
<keyword id="KW-1185">Reference proteome</keyword>
<keyword id="KW-0742">SOS response</keyword>
<feature type="chain" id="PRO_1000193303" description="Protein RecA">
    <location>
        <begin position="1"/>
        <end position="349"/>
    </location>
</feature>
<feature type="binding site" evidence="1">
    <location>
        <begin position="69"/>
        <end position="76"/>
    </location>
    <ligand>
        <name>ATP</name>
        <dbReference type="ChEBI" id="CHEBI:30616"/>
    </ligand>
</feature>
<evidence type="ECO:0000255" key="1">
    <source>
        <dbReference type="HAMAP-Rule" id="MF_00268"/>
    </source>
</evidence>
<protein>
    <recommendedName>
        <fullName evidence="1">Protein RecA</fullName>
    </recommendedName>
    <alternativeName>
        <fullName evidence="1">Recombinase A</fullName>
    </alternativeName>
</protein>
<comment type="function">
    <text evidence="1">Can catalyze the hydrolysis of ATP in the presence of single-stranded DNA, the ATP-dependent uptake of single-stranded DNA by duplex DNA, and the ATP-dependent hybridization of homologous single-stranded DNAs. It interacts with LexA causing its activation and leading to its autocatalytic cleavage.</text>
</comment>
<comment type="subcellular location">
    <subcellularLocation>
        <location evidence="1">Cytoplasm</location>
    </subcellularLocation>
</comment>
<comment type="similarity">
    <text evidence="1">Belongs to the RecA family.</text>
</comment>
<gene>
    <name evidence="1" type="primary">recA</name>
    <name type="ordered locus">PCC8801_0945</name>
</gene>
<sequence>MAAITNNPDKEKALGLVLNQIERNFGKGSIMRLGDAARMRVETISSGSLTLDLALGGGLPQGRIIEIYGPESSGKTTLALHAIAEVQKAGGVAAFVDAEHALDPNYSNALGVDIDNLLVAQPDTGESALEIVDQLVRSAAVDIVVIDSVAALVPRAEIEGEMGDTQVGLQARLMSKALRKIAGNIGKSGCVVIFLNQLRQKIGVTYGSPEVTTGGNALKFYASVRLDIRRIQTLKKGSEGEYGIRAKVKVAKNKVAPPFRIAEFDIIFGKGISRMGCMLDLAEQTDVVNRKGAWYSYNGENISQGRDNAVKYLEDNPEVADTIERQVREKLELGSLNFAISQTDDNEEE</sequence>
<organism>
    <name type="scientific">Rippkaea orientalis (strain PCC 8801 / RF-1)</name>
    <name type="common">Cyanothece sp. (strain PCC 8801)</name>
    <dbReference type="NCBI Taxonomy" id="41431"/>
    <lineage>
        <taxon>Bacteria</taxon>
        <taxon>Bacillati</taxon>
        <taxon>Cyanobacteriota</taxon>
        <taxon>Cyanophyceae</taxon>
        <taxon>Oscillatoriophycideae</taxon>
        <taxon>Chroococcales</taxon>
        <taxon>Aphanothecaceae</taxon>
        <taxon>Rippkaea</taxon>
        <taxon>Rippkaea orientalis</taxon>
    </lineage>
</organism>